<organism>
    <name type="scientific">Methanobrevibacter smithii (strain ATCC 35061 / DSM 861 / OCM 144 / PS)</name>
    <dbReference type="NCBI Taxonomy" id="420247"/>
    <lineage>
        <taxon>Archaea</taxon>
        <taxon>Methanobacteriati</taxon>
        <taxon>Methanobacteriota</taxon>
        <taxon>Methanomada group</taxon>
        <taxon>Methanobacteria</taxon>
        <taxon>Methanobacteriales</taxon>
        <taxon>Methanobacteriaceae</taxon>
        <taxon>Methanobrevibacter</taxon>
    </lineage>
</organism>
<dbReference type="EC" id="5.4.2.10" evidence="1"/>
<dbReference type="EMBL" id="CP000678">
    <property type="protein sequence ID" value="ABQ86861.1"/>
    <property type="status" value="ALT_INIT"/>
    <property type="molecule type" value="Genomic_DNA"/>
</dbReference>
<dbReference type="SMR" id="A5UKY3"/>
<dbReference type="STRING" id="420247.Msm_0656"/>
<dbReference type="EnsemblBacteria" id="ABQ86861">
    <property type="protein sequence ID" value="ABQ86861"/>
    <property type="gene ID" value="Msm_0656"/>
</dbReference>
<dbReference type="KEGG" id="msi:Msm_0656"/>
<dbReference type="PATRIC" id="fig|420247.28.peg.653"/>
<dbReference type="eggNOG" id="arCOG00767">
    <property type="taxonomic scope" value="Archaea"/>
</dbReference>
<dbReference type="HOGENOM" id="CLU_016950_7_1_2"/>
<dbReference type="Proteomes" id="UP000001992">
    <property type="component" value="Chromosome"/>
</dbReference>
<dbReference type="GO" id="GO:0000287">
    <property type="term" value="F:magnesium ion binding"/>
    <property type="evidence" value="ECO:0007669"/>
    <property type="project" value="UniProtKB-UniRule"/>
</dbReference>
<dbReference type="GO" id="GO:0008966">
    <property type="term" value="F:phosphoglucosamine mutase activity"/>
    <property type="evidence" value="ECO:0007669"/>
    <property type="project" value="UniProtKB-UniRule"/>
</dbReference>
<dbReference type="GO" id="GO:0005975">
    <property type="term" value="P:carbohydrate metabolic process"/>
    <property type="evidence" value="ECO:0007669"/>
    <property type="project" value="InterPro"/>
</dbReference>
<dbReference type="CDD" id="cd03087">
    <property type="entry name" value="PGM_like1"/>
    <property type="match status" value="1"/>
</dbReference>
<dbReference type="FunFam" id="3.40.120.10:FF:000001">
    <property type="entry name" value="Phosphoglucosamine mutase"/>
    <property type="match status" value="1"/>
</dbReference>
<dbReference type="FunFam" id="3.40.120.10:FF:000003">
    <property type="entry name" value="Phosphoglucosamine mutase"/>
    <property type="match status" value="1"/>
</dbReference>
<dbReference type="Gene3D" id="3.40.120.10">
    <property type="entry name" value="Alpha-D-Glucose-1,6-Bisphosphate, subunit A, domain 3"/>
    <property type="match status" value="3"/>
</dbReference>
<dbReference type="Gene3D" id="3.30.310.50">
    <property type="entry name" value="Alpha-D-phosphohexomutase, C-terminal domain"/>
    <property type="match status" value="1"/>
</dbReference>
<dbReference type="HAMAP" id="MF_01554_A">
    <property type="entry name" value="GlmM_A"/>
    <property type="match status" value="1"/>
</dbReference>
<dbReference type="InterPro" id="IPR005844">
    <property type="entry name" value="A-D-PHexomutase_a/b/a-I"/>
</dbReference>
<dbReference type="InterPro" id="IPR016055">
    <property type="entry name" value="A-D-PHexomutase_a/b/a-I/II/III"/>
</dbReference>
<dbReference type="InterPro" id="IPR005845">
    <property type="entry name" value="A-D-PHexomutase_a/b/a-II"/>
</dbReference>
<dbReference type="InterPro" id="IPR005846">
    <property type="entry name" value="A-D-PHexomutase_a/b/a-III"/>
</dbReference>
<dbReference type="InterPro" id="IPR005843">
    <property type="entry name" value="A-D-PHexomutase_C"/>
</dbReference>
<dbReference type="InterPro" id="IPR036900">
    <property type="entry name" value="A-D-PHexomutase_C_sf"/>
</dbReference>
<dbReference type="InterPro" id="IPR016066">
    <property type="entry name" value="A-D-PHexomutase_CS"/>
</dbReference>
<dbReference type="InterPro" id="IPR005841">
    <property type="entry name" value="Alpha-D-phosphohexomutase_SF"/>
</dbReference>
<dbReference type="InterPro" id="IPR023666">
    <property type="entry name" value="GlmM_arc"/>
</dbReference>
<dbReference type="InterPro" id="IPR024086">
    <property type="entry name" value="GlmM_arc-type"/>
</dbReference>
<dbReference type="NCBIfam" id="TIGR03990">
    <property type="entry name" value="Arch_GlmM"/>
    <property type="match status" value="1"/>
</dbReference>
<dbReference type="PANTHER" id="PTHR43771">
    <property type="entry name" value="PHOSPHOMANNOMUTASE"/>
    <property type="match status" value="1"/>
</dbReference>
<dbReference type="PANTHER" id="PTHR43771:SF1">
    <property type="entry name" value="PHOSPHOMANNOMUTASE"/>
    <property type="match status" value="1"/>
</dbReference>
<dbReference type="Pfam" id="PF02878">
    <property type="entry name" value="PGM_PMM_I"/>
    <property type="match status" value="1"/>
</dbReference>
<dbReference type="Pfam" id="PF02879">
    <property type="entry name" value="PGM_PMM_II"/>
    <property type="match status" value="1"/>
</dbReference>
<dbReference type="Pfam" id="PF02880">
    <property type="entry name" value="PGM_PMM_III"/>
    <property type="match status" value="1"/>
</dbReference>
<dbReference type="Pfam" id="PF00408">
    <property type="entry name" value="PGM_PMM_IV"/>
    <property type="match status" value="1"/>
</dbReference>
<dbReference type="PRINTS" id="PR00509">
    <property type="entry name" value="PGMPMM"/>
</dbReference>
<dbReference type="SUPFAM" id="SSF55957">
    <property type="entry name" value="Phosphoglucomutase, C-terminal domain"/>
    <property type="match status" value="1"/>
</dbReference>
<dbReference type="SUPFAM" id="SSF53738">
    <property type="entry name" value="Phosphoglucomutase, first 3 domains"/>
    <property type="match status" value="3"/>
</dbReference>
<dbReference type="PROSITE" id="PS00710">
    <property type="entry name" value="PGM_PMM"/>
    <property type="match status" value="1"/>
</dbReference>
<evidence type="ECO:0000255" key="1">
    <source>
        <dbReference type="HAMAP-Rule" id="MF_01554"/>
    </source>
</evidence>
<evidence type="ECO:0000305" key="2"/>
<sequence length="445" mass="47984">MAVKKLFGTSGIRGKINSEVTCELALNVGKSLACYLGNEGTVVLGYDTRTTNVMLDQAICAGLLESGVDVIKIGMVPTPLVGYATDKLGADAGVMLTASHNPSQYNGIKIWNANGMAYTSAQEAKIEEIYSNESYTSVSWDKVGSLRVNEEIKGRYIDDLVGMVNIKPGLKVVIDCASGAGSEISPLVFRKAGCEVTTLNSQPDGFFPGRNPEPNAENLQNLMKTVVAIGADLGIAHDGDADRMITIDENGDISPFDSLLALMSKEFDGDIVTTVDAGLCMDESVKGNVLRTKVGDVNVAEVIIEKDAAFGGEPSGTWLHPDFCMCPDGILSGLRMAELVSNKGKLSELLLEIPSYPNIREKIICSKEAKTAVMENMEDLLKDSFDDIKEINSIDGVRLTFNDDSWVLVRPSGTEDYIRITLESKDSTKAQAIKETCVKIIKENI</sequence>
<accession>A5UKY3</accession>
<reference key="1">
    <citation type="journal article" date="2007" name="Proc. Natl. Acad. Sci. U.S.A.">
        <title>Genomic and metabolic adaptations of Methanobrevibacter smithii to the human gut.</title>
        <authorList>
            <person name="Samuel B.S."/>
            <person name="Hansen E.E."/>
            <person name="Manchester J.K."/>
            <person name="Coutinho P.M."/>
            <person name="Henrissat B."/>
            <person name="Fulton R."/>
            <person name="Latreille P."/>
            <person name="Kim K."/>
            <person name="Wilson R.K."/>
            <person name="Gordon J.I."/>
        </authorList>
    </citation>
    <scope>NUCLEOTIDE SEQUENCE [LARGE SCALE GENOMIC DNA]</scope>
    <source>
        <strain>ATCC 35061 / DSM 861 / OCM 144 / PS</strain>
    </source>
</reference>
<protein>
    <recommendedName>
        <fullName evidence="1">Probable phosphoglucosamine mutase</fullName>
        <ecNumber evidence="1">5.4.2.10</ecNumber>
    </recommendedName>
</protein>
<comment type="function">
    <text evidence="1">Catalyzes the conversion of glucosamine-6-phosphate to glucosamine-1-phosphate.</text>
</comment>
<comment type="catalytic activity">
    <reaction evidence="1">
        <text>alpha-D-glucosamine 1-phosphate = D-glucosamine 6-phosphate</text>
        <dbReference type="Rhea" id="RHEA:23424"/>
        <dbReference type="ChEBI" id="CHEBI:58516"/>
        <dbReference type="ChEBI" id="CHEBI:58725"/>
        <dbReference type="EC" id="5.4.2.10"/>
    </reaction>
</comment>
<comment type="cofactor">
    <cofactor evidence="1">
        <name>Mg(2+)</name>
        <dbReference type="ChEBI" id="CHEBI:18420"/>
    </cofactor>
    <text evidence="1">Binds 1 Mg(2+) ion per subunit.</text>
</comment>
<comment type="PTM">
    <text evidence="1">Activated by phosphorylation.</text>
</comment>
<comment type="similarity">
    <text evidence="1">Belongs to the phosphohexose mutase family.</text>
</comment>
<comment type="sequence caution" evidence="2">
    <conflict type="erroneous initiation">
        <sequence resource="EMBL-CDS" id="ABQ86861"/>
    </conflict>
</comment>
<keyword id="KW-0413">Isomerase</keyword>
<keyword id="KW-0460">Magnesium</keyword>
<keyword id="KW-0479">Metal-binding</keyword>
<keyword id="KW-0597">Phosphoprotein</keyword>
<proteinExistence type="inferred from homology"/>
<feature type="chain" id="PRO_0000337810" description="Probable phosphoglucosamine mutase">
    <location>
        <begin position="1"/>
        <end position="445"/>
    </location>
</feature>
<feature type="active site" description="Phosphoserine intermediate" evidence="1">
    <location>
        <position position="99"/>
    </location>
</feature>
<feature type="binding site" description="via phosphate group" evidence="1">
    <location>
        <position position="99"/>
    </location>
    <ligand>
        <name>Mg(2+)</name>
        <dbReference type="ChEBI" id="CHEBI:18420"/>
    </ligand>
</feature>
<feature type="binding site" evidence="1">
    <location>
        <position position="238"/>
    </location>
    <ligand>
        <name>Mg(2+)</name>
        <dbReference type="ChEBI" id="CHEBI:18420"/>
    </ligand>
</feature>
<feature type="binding site" evidence="1">
    <location>
        <position position="240"/>
    </location>
    <ligand>
        <name>Mg(2+)</name>
        <dbReference type="ChEBI" id="CHEBI:18420"/>
    </ligand>
</feature>
<feature type="binding site" evidence="1">
    <location>
        <position position="242"/>
    </location>
    <ligand>
        <name>Mg(2+)</name>
        <dbReference type="ChEBI" id="CHEBI:18420"/>
    </ligand>
</feature>
<feature type="modified residue" description="Phosphoserine" evidence="1">
    <location>
        <position position="99"/>
    </location>
</feature>
<name>GLMM_METS3</name>
<gene>
    <name evidence="1" type="primary">glmM</name>
    <name type="ordered locus">Msm_0656</name>
</gene>